<dbReference type="EMBL" id="CP000709">
    <property type="protein sequence ID" value="ABQ62180.1"/>
    <property type="molecule type" value="Genomic_DNA"/>
</dbReference>
<dbReference type="RefSeq" id="WP_006016422.1">
    <property type="nucleotide sequence ID" value="NC_009504.1"/>
</dbReference>
<dbReference type="SMR" id="A5VVG4"/>
<dbReference type="GeneID" id="45126204"/>
<dbReference type="KEGG" id="bov:BOV_A0835"/>
<dbReference type="HOGENOM" id="CLU_155659_2_2_5"/>
<dbReference type="Proteomes" id="UP000006383">
    <property type="component" value="Chromosome II"/>
</dbReference>
<dbReference type="GO" id="GO:0005829">
    <property type="term" value="C:cytosol"/>
    <property type="evidence" value="ECO:0007669"/>
    <property type="project" value="TreeGrafter"/>
</dbReference>
<dbReference type="FunFam" id="2.20.25.10:FF:000002">
    <property type="entry name" value="UPF0434 protein YcaR"/>
    <property type="match status" value="1"/>
</dbReference>
<dbReference type="Gene3D" id="2.20.25.10">
    <property type="match status" value="1"/>
</dbReference>
<dbReference type="HAMAP" id="MF_01187">
    <property type="entry name" value="UPF0434"/>
    <property type="match status" value="1"/>
</dbReference>
<dbReference type="InterPro" id="IPR005651">
    <property type="entry name" value="Trm112-like"/>
</dbReference>
<dbReference type="PANTHER" id="PTHR33505:SF4">
    <property type="entry name" value="PROTEIN PREY, MITOCHONDRIAL"/>
    <property type="match status" value="1"/>
</dbReference>
<dbReference type="PANTHER" id="PTHR33505">
    <property type="entry name" value="ZGC:162634"/>
    <property type="match status" value="1"/>
</dbReference>
<dbReference type="Pfam" id="PF03966">
    <property type="entry name" value="Trm112p"/>
    <property type="match status" value="1"/>
</dbReference>
<dbReference type="SUPFAM" id="SSF158997">
    <property type="entry name" value="Trm112p-like"/>
    <property type="match status" value="1"/>
</dbReference>
<name>Y3035_BRUO2</name>
<comment type="similarity">
    <text evidence="1">Belongs to the UPF0434 family.</text>
</comment>
<proteinExistence type="inferred from homology"/>
<accession>A5VVG4</accession>
<reference key="1">
    <citation type="journal article" date="2009" name="PLoS ONE">
        <title>Genome degradation in Brucella ovis corresponds with narrowing of its host range and tissue tropism.</title>
        <authorList>
            <person name="Tsolis R.M."/>
            <person name="Seshadri R."/>
            <person name="Santos R.L."/>
            <person name="Sangari F.J."/>
            <person name="Lobo J.M."/>
            <person name="de Jong M.F."/>
            <person name="Ren Q."/>
            <person name="Myers G."/>
            <person name="Brinkac L.M."/>
            <person name="Nelson W.C."/>
            <person name="Deboy R.T."/>
            <person name="Angiuoli S."/>
            <person name="Khouri H."/>
            <person name="Dimitrov G."/>
            <person name="Robinson J.R."/>
            <person name="Mulligan S."/>
            <person name="Walker R.L."/>
            <person name="Elzer P.E."/>
            <person name="Hassan K.A."/>
            <person name="Paulsen I.T."/>
        </authorList>
    </citation>
    <scope>NUCLEOTIDE SEQUENCE [LARGE SCALE GENOMIC DNA]</scope>
    <source>
        <strain>ATCC 25840 / 63/290 / NCTC 10512</strain>
    </source>
</reference>
<protein>
    <recommendedName>
        <fullName evidence="1">UPF0434 protein BOV_A0835</fullName>
    </recommendedName>
</protein>
<gene>
    <name type="ordered locus">BOV_A0835</name>
</gene>
<evidence type="ECO:0000255" key="1">
    <source>
        <dbReference type="HAMAP-Rule" id="MF_01187"/>
    </source>
</evidence>
<organism>
    <name type="scientific">Brucella ovis (strain ATCC 25840 / 63/290 / NCTC 10512)</name>
    <dbReference type="NCBI Taxonomy" id="444178"/>
    <lineage>
        <taxon>Bacteria</taxon>
        <taxon>Pseudomonadati</taxon>
        <taxon>Pseudomonadota</taxon>
        <taxon>Alphaproteobacteria</taxon>
        <taxon>Hyphomicrobiales</taxon>
        <taxon>Brucellaceae</taxon>
        <taxon>Brucella/Ochrobactrum group</taxon>
        <taxon>Brucella</taxon>
    </lineage>
</organism>
<feature type="chain" id="PRO_1000065830" description="UPF0434 protein BOV_A0835">
    <location>
        <begin position="1"/>
        <end position="64"/>
    </location>
</feature>
<sequence>MDNKVETGNIDVRLLELLVCPLTKGPLEYDAERSELVSRKARLAYPVRGGIPIMLPSEARSLTE</sequence>